<proteinExistence type="evidence at transcript level"/>
<reference key="1">
    <citation type="submission" date="2002-03" db="EMBL/GenBank/DDBJ databases">
        <title>Genes and peptides from the scorpion Centruroides limpidus limpidus, that recognize Na(+)-channels.</title>
        <authorList>
            <person name="Corona M."/>
            <person name="Possani L.D."/>
        </authorList>
    </citation>
    <scope>NUCLEOTIDE SEQUENCE [MRNA]</scope>
</reference>
<accession>P59865</accession>
<evidence type="ECO:0000250" key="1"/>
<evidence type="ECO:0000255" key="2"/>
<evidence type="ECO:0000255" key="3">
    <source>
        <dbReference type="PROSITE-ProRule" id="PRU01210"/>
    </source>
</evidence>
<evidence type="ECO:0000305" key="4"/>
<protein>
    <recommendedName>
        <fullName>Toxin Cll7</fullName>
    </recommendedName>
</protein>
<comment type="function">
    <text evidence="1">Beta toxins bind voltage-independently at site-4 of sodium channels (Nav) and shift the voltage of activation toward more negative potentials thereby affecting sodium channel activation and promoting spontaneous and repetitive firing.</text>
</comment>
<comment type="subcellular location">
    <subcellularLocation>
        <location>Secreted</location>
    </subcellularLocation>
</comment>
<comment type="tissue specificity">
    <text>Expressed by the venom gland.</text>
</comment>
<comment type="domain">
    <text evidence="4">Has the structural arrangement of an alpha-helix connected to antiparallel beta-sheets by disulfide bonds (CS-alpha/beta).</text>
</comment>
<comment type="similarity">
    <text evidence="4">Belongs to the long (4 C-C) scorpion toxin superfamily. Sodium channel inhibitor family. Beta subfamily.</text>
</comment>
<dbReference type="EMBL" id="AF491133">
    <property type="protein sequence ID" value="AAP49508.1"/>
    <property type="molecule type" value="mRNA"/>
</dbReference>
<dbReference type="SMR" id="P59865"/>
<dbReference type="GO" id="GO:0005576">
    <property type="term" value="C:extracellular region"/>
    <property type="evidence" value="ECO:0007669"/>
    <property type="project" value="UniProtKB-SubCell"/>
</dbReference>
<dbReference type="GO" id="GO:0019871">
    <property type="term" value="F:sodium channel inhibitor activity"/>
    <property type="evidence" value="ECO:0007669"/>
    <property type="project" value="InterPro"/>
</dbReference>
<dbReference type="GO" id="GO:0090729">
    <property type="term" value="F:toxin activity"/>
    <property type="evidence" value="ECO:0007669"/>
    <property type="project" value="UniProtKB-KW"/>
</dbReference>
<dbReference type="GO" id="GO:0006952">
    <property type="term" value="P:defense response"/>
    <property type="evidence" value="ECO:0007669"/>
    <property type="project" value="InterPro"/>
</dbReference>
<dbReference type="CDD" id="cd23106">
    <property type="entry name" value="neurotoxins_LC_scorpion"/>
    <property type="match status" value="1"/>
</dbReference>
<dbReference type="Gene3D" id="3.30.30.10">
    <property type="entry name" value="Knottin, scorpion toxin-like"/>
    <property type="match status" value="1"/>
</dbReference>
<dbReference type="InterPro" id="IPR044062">
    <property type="entry name" value="LCN-type_CS_alpha_beta_dom"/>
</dbReference>
<dbReference type="InterPro" id="IPR003614">
    <property type="entry name" value="Scorpion_toxin-like"/>
</dbReference>
<dbReference type="InterPro" id="IPR036574">
    <property type="entry name" value="Scorpion_toxin-like_sf"/>
</dbReference>
<dbReference type="InterPro" id="IPR018218">
    <property type="entry name" value="Scorpion_toxinL"/>
</dbReference>
<dbReference type="InterPro" id="IPR002061">
    <property type="entry name" value="Scorpion_toxinL/defensin"/>
</dbReference>
<dbReference type="Pfam" id="PF00537">
    <property type="entry name" value="Toxin_3"/>
    <property type="match status" value="1"/>
</dbReference>
<dbReference type="PRINTS" id="PR00285">
    <property type="entry name" value="SCORPNTOXIN"/>
</dbReference>
<dbReference type="SMART" id="SM00505">
    <property type="entry name" value="Knot1"/>
    <property type="match status" value="1"/>
</dbReference>
<dbReference type="SUPFAM" id="SSF57095">
    <property type="entry name" value="Scorpion toxin-like"/>
    <property type="match status" value="1"/>
</dbReference>
<dbReference type="PROSITE" id="PS51863">
    <property type="entry name" value="LCN_CSAB"/>
    <property type="match status" value="1"/>
</dbReference>
<feature type="signal peptide" evidence="2">
    <location>
        <begin position="1"/>
        <end position="19"/>
    </location>
</feature>
<feature type="chain" id="PRO_0000035277" description="Toxin Cll7">
    <location>
        <begin position="20"/>
        <end position="82"/>
    </location>
</feature>
<feature type="domain" description="LCN-type CS-alpha/beta" evidence="3">
    <location>
        <begin position="20"/>
        <end position="83"/>
    </location>
</feature>
<feature type="disulfide bond" evidence="3">
    <location>
        <begin position="31"/>
        <end position="82"/>
    </location>
</feature>
<feature type="disulfide bond" evidence="3">
    <location>
        <begin position="35"/>
        <end position="58"/>
    </location>
</feature>
<feature type="disulfide bond" evidence="3">
    <location>
        <begin position="44"/>
        <end position="63"/>
    </location>
</feature>
<feature type="disulfide bond" evidence="3">
    <location>
        <begin position="48"/>
        <end position="65"/>
    </location>
</feature>
<organism>
    <name type="scientific">Centruroides limpidus</name>
    <name type="common">Mexican scorpion</name>
    <dbReference type="NCBI Taxonomy" id="6876"/>
    <lineage>
        <taxon>Eukaryota</taxon>
        <taxon>Metazoa</taxon>
        <taxon>Ecdysozoa</taxon>
        <taxon>Arthropoda</taxon>
        <taxon>Chelicerata</taxon>
        <taxon>Arachnida</taxon>
        <taxon>Scorpiones</taxon>
        <taxon>Buthida</taxon>
        <taxon>Buthoidea</taxon>
        <taxon>Buthidae</taxon>
        <taxon>Centruroides</taxon>
    </lineage>
</organism>
<name>SCX7_CENLI</name>
<keyword id="KW-1015">Disulfide bond</keyword>
<keyword id="KW-0872">Ion channel impairing toxin</keyword>
<keyword id="KW-0528">Neurotoxin</keyword>
<keyword id="KW-0964">Secreted</keyword>
<keyword id="KW-0732">Signal</keyword>
<keyword id="KW-0800">Toxin</keyword>
<keyword id="KW-0738">Voltage-gated sodium channel impairing toxin</keyword>
<sequence>MNSLLMITACLVLFGTVWAKEGYLVNTYTGCKYICWKLGENKYCIDECKEIGAGYGYCYGFGCYCEGFPENKPTWPLPNKTCGRK</sequence>